<accession>Q32EZ5</accession>
<organism>
    <name type="scientific">Shigella dysenteriae serotype 1 (strain Sd197)</name>
    <dbReference type="NCBI Taxonomy" id="300267"/>
    <lineage>
        <taxon>Bacteria</taxon>
        <taxon>Pseudomonadati</taxon>
        <taxon>Pseudomonadota</taxon>
        <taxon>Gammaproteobacteria</taxon>
        <taxon>Enterobacterales</taxon>
        <taxon>Enterobacteriaceae</taxon>
        <taxon>Shigella</taxon>
    </lineage>
</organism>
<proteinExistence type="inferred from homology"/>
<sequence>MKWVVIDTVIQPTCGISFSAIWGDMKMIIWYQSTIFLPPGSIFTPVKPGIILKDKEYPITIYNIAPFNKNLWSLLKSSQECPPGESEITNKCLHKSCIIKICPYGLK</sequence>
<name>IRAM_SHIDS</name>
<feature type="chain" id="PRO_0000337887" description="Anti-adapter protein IraM">
    <location>
        <begin position="1"/>
        <end position="107"/>
    </location>
</feature>
<dbReference type="EMBL" id="CP000034">
    <property type="protein sequence ID" value="ABB62110.1"/>
    <property type="molecule type" value="Genomic_DNA"/>
</dbReference>
<dbReference type="RefSeq" id="WP_000872356.1">
    <property type="nucleotide sequence ID" value="NC_007606.1"/>
</dbReference>
<dbReference type="RefSeq" id="YP_403601.1">
    <property type="nucleotide sequence ID" value="NC_007606.1"/>
</dbReference>
<dbReference type="SMR" id="Q32EZ5"/>
<dbReference type="STRING" id="300267.SDY_2015"/>
<dbReference type="EnsemblBacteria" id="ABB62110">
    <property type="protein sequence ID" value="ABB62110"/>
    <property type="gene ID" value="SDY_2015"/>
</dbReference>
<dbReference type="KEGG" id="sdy:SDY_2015"/>
<dbReference type="HOGENOM" id="CLU_143527_1_0_6"/>
<dbReference type="Proteomes" id="UP000002716">
    <property type="component" value="Chromosome"/>
</dbReference>
<dbReference type="GO" id="GO:0005737">
    <property type="term" value="C:cytoplasm"/>
    <property type="evidence" value="ECO:0007669"/>
    <property type="project" value="UniProtKB-SubCell"/>
</dbReference>
<dbReference type="GO" id="GO:0009267">
    <property type="term" value="P:cellular response to starvation"/>
    <property type="evidence" value="ECO:0007669"/>
    <property type="project" value="UniProtKB-UniRule"/>
</dbReference>
<dbReference type="FunFam" id="2.40.50.650:FF:000001">
    <property type="entry name" value="Anti-adapter protein IraM"/>
    <property type="match status" value="1"/>
</dbReference>
<dbReference type="Gene3D" id="2.40.50.650">
    <property type="match status" value="1"/>
</dbReference>
<dbReference type="HAMAP" id="MF_01199">
    <property type="entry name" value="Anti_adapt_IraM"/>
    <property type="match status" value="1"/>
</dbReference>
<dbReference type="InterPro" id="IPR014448">
    <property type="entry name" value="Anti-adapter_IraM"/>
</dbReference>
<dbReference type="InterPro" id="IPR038679">
    <property type="entry name" value="PmrD_sf"/>
</dbReference>
<dbReference type="NCBIfam" id="NF007393">
    <property type="entry name" value="PRK09919.1"/>
    <property type="match status" value="1"/>
</dbReference>
<dbReference type="PIRSF" id="PIRSF007036">
    <property type="entry name" value="Elb1"/>
    <property type="match status" value="1"/>
</dbReference>
<reference key="1">
    <citation type="journal article" date="2005" name="Nucleic Acids Res.">
        <title>Genome dynamics and diversity of Shigella species, the etiologic agents of bacillary dysentery.</title>
        <authorList>
            <person name="Yang F."/>
            <person name="Yang J."/>
            <person name="Zhang X."/>
            <person name="Chen L."/>
            <person name="Jiang Y."/>
            <person name="Yan Y."/>
            <person name="Tang X."/>
            <person name="Wang J."/>
            <person name="Xiong Z."/>
            <person name="Dong J."/>
            <person name="Xue Y."/>
            <person name="Zhu Y."/>
            <person name="Xu X."/>
            <person name="Sun L."/>
            <person name="Chen S."/>
            <person name="Nie H."/>
            <person name="Peng J."/>
            <person name="Xu J."/>
            <person name="Wang Y."/>
            <person name="Yuan Z."/>
            <person name="Wen Y."/>
            <person name="Yao Z."/>
            <person name="Shen Y."/>
            <person name="Qiang B."/>
            <person name="Hou Y."/>
            <person name="Yu J."/>
            <person name="Jin Q."/>
        </authorList>
    </citation>
    <scope>NUCLEOTIDE SEQUENCE [LARGE SCALE GENOMIC DNA]</scope>
    <source>
        <strain>Sd197</strain>
    </source>
</reference>
<protein>
    <recommendedName>
        <fullName evidence="1">Anti-adapter protein IraM</fullName>
    </recommendedName>
</protein>
<comment type="function">
    <text evidence="1">Inhibits RpoS proteolysis by regulating RssB activity, thereby increasing the stability of the sigma stress factor RpoS during magnesium starvation.</text>
</comment>
<comment type="subcellular location">
    <subcellularLocation>
        <location evidence="1">Cytoplasm</location>
    </subcellularLocation>
</comment>
<comment type="similarity">
    <text evidence="1">Belongs to the IraM/RssC family.</text>
</comment>
<gene>
    <name evidence="1" type="primary">iraM</name>
    <name type="ordered locus">SDY_2015</name>
</gene>
<evidence type="ECO:0000255" key="1">
    <source>
        <dbReference type="HAMAP-Rule" id="MF_01199"/>
    </source>
</evidence>
<keyword id="KW-0963">Cytoplasm</keyword>
<keyword id="KW-1185">Reference proteome</keyword>
<keyword id="KW-0346">Stress response</keyword>